<feature type="chain" id="PRO_0000309624" description="Hydroxyacylglutathione hydrolase">
    <location>
        <begin position="1"/>
        <end position="255"/>
    </location>
</feature>
<feature type="binding site" evidence="1">
    <location>
        <position position="52"/>
    </location>
    <ligand>
        <name>Zn(2+)</name>
        <dbReference type="ChEBI" id="CHEBI:29105"/>
        <label>1</label>
    </ligand>
</feature>
<feature type="binding site" evidence="1">
    <location>
        <position position="54"/>
    </location>
    <ligand>
        <name>Zn(2+)</name>
        <dbReference type="ChEBI" id="CHEBI:29105"/>
        <label>1</label>
    </ligand>
</feature>
<feature type="binding site" evidence="1">
    <location>
        <position position="56"/>
    </location>
    <ligand>
        <name>Zn(2+)</name>
        <dbReference type="ChEBI" id="CHEBI:29105"/>
        <label>2</label>
    </ligand>
</feature>
<feature type="binding site" evidence="1">
    <location>
        <position position="57"/>
    </location>
    <ligand>
        <name>Zn(2+)</name>
        <dbReference type="ChEBI" id="CHEBI:29105"/>
        <label>2</label>
    </ligand>
</feature>
<feature type="binding site" evidence="1">
    <location>
        <position position="109"/>
    </location>
    <ligand>
        <name>Zn(2+)</name>
        <dbReference type="ChEBI" id="CHEBI:29105"/>
        <label>1</label>
    </ligand>
</feature>
<feature type="binding site" evidence="1">
    <location>
        <position position="126"/>
    </location>
    <ligand>
        <name>Zn(2+)</name>
        <dbReference type="ChEBI" id="CHEBI:29105"/>
        <label>1</label>
    </ligand>
</feature>
<feature type="binding site" evidence="1">
    <location>
        <position position="126"/>
    </location>
    <ligand>
        <name>Zn(2+)</name>
        <dbReference type="ChEBI" id="CHEBI:29105"/>
        <label>2</label>
    </ligand>
</feature>
<feature type="binding site" evidence="1">
    <location>
        <position position="166"/>
    </location>
    <ligand>
        <name>Zn(2+)</name>
        <dbReference type="ChEBI" id="CHEBI:29105"/>
        <label>2</label>
    </ligand>
</feature>
<keyword id="KW-0378">Hydrolase</keyword>
<keyword id="KW-0479">Metal-binding</keyword>
<keyword id="KW-1185">Reference proteome</keyword>
<keyword id="KW-0862">Zinc</keyword>
<accession>Q2IJC6</accession>
<organism>
    <name type="scientific">Anaeromyxobacter dehalogenans (strain 2CP-C)</name>
    <dbReference type="NCBI Taxonomy" id="290397"/>
    <lineage>
        <taxon>Bacteria</taxon>
        <taxon>Pseudomonadati</taxon>
        <taxon>Myxococcota</taxon>
        <taxon>Myxococcia</taxon>
        <taxon>Myxococcales</taxon>
        <taxon>Cystobacterineae</taxon>
        <taxon>Anaeromyxobacteraceae</taxon>
        <taxon>Anaeromyxobacter</taxon>
    </lineage>
</organism>
<proteinExistence type="inferred from homology"/>
<gene>
    <name evidence="1" type="primary">gloB</name>
    <name type="ordered locus">Adeh_1984</name>
</gene>
<evidence type="ECO:0000255" key="1">
    <source>
        <dbReference type="HAMAP-Rule" id="MF_01374"/>
    </source>
</evidence>
<sequence length="255" mass="26228">MIFDRRRYGKDNYTYLLAAGGDAALVDPGDPDAALALAAAHGVRPRWILHTHGHADHTGGTAAVARALGAQVLGHGGDAARYRPDVDLAGRAEVALGALALRVHPVPGHTPGSVLLEWEGRLLTGDTLFWAGCGNCRHGGDPARLAESFLGPIARLDGGLEVHPGHDYAAPNLAFALALEPDGAAARARLAEVEAAHAAGLEPAPSTLAGERAVNPFLRLDAPGVAAAVARAEPSAAAAGPARRFVALRALRDRA</sequence>
<dbReference type="EC" id="3.1.2.6" evidence="1"/>
<dbReference type="EMBL" id="CP000251">
    <property type="protein sequence ID" value="ABC81755.1"/>
    <property type="molecule type" value="Genomic_DNA"/>
</dbReference>
<dbReference type="RefSeq" id="WP_011421037.1">
    <property type="nucleotide sequence ID" value="NC_007760.1"/>
</dbReference>
<dbReference type="SMR" id="Q2IJC6"/>
<dbReference type="STRING" id="290397.Adeh_1984"/>
<dbReference type="KEGG" id="ade:Adeh_1984"/>
<dbReference type="eggNOG" id="COG0491">
    <property type="taxonomic scope" value="Bacteria"/>
</dbReference>
<dbReference type="HOGENOM" id="CLU_030571_4_1_7"/>
<dbReference type="OrthoDB" id="9802248at2"/>
<dbReference type="UniPathway" id="UPA00619">
    <property type="reaction ID" value="UER00676"/>
</dbReference>
<dbReference type="Proteomes" id="UP000001935">
    <property type="component" value="Chromosome"/>
</dbReference>
<dbReference type="GO" id="GO:0008800">
    <property type="term" value="F:beta-lactamase activity"/>
    <property type="evidence" value="ECO:0007669"/>
    <property type="project" value="InterPro"/>
</dbReference>
<dbReference type="GO" id="GO:0004416">
    <property type="term" value="F:hydroxyacylglutathione hydrolase activity"/>
    <property type="evidence" value="ECO:0007669"/>
    <property type="project" value="UniProtKB-UniRule"/>
</dbReference>
<dbReference type="GO" id="GO:0008270">
    <property type="term" value="F:zinc ion binding"/>
    <property type="evidence" value="ECO:0007669"/>
    <property type="project" value="InterPro"/>
</dbReference>
<dbReference type="GO" id="GO:0017001">
    <property type="term" value="P:antibiotic catabolic process"/>
    <property type="evidence" value="ECO:0007669"/>
    <property type="project" value="InterPro"/>
</dbReference>
<dbReference type="GO" id="GO:0019243">
    <property type="term" value="P:methylglyoxal catabolic process to D-lactate via S-lactoyl-glutathione"/>
    <property type="evidence" value="ECO:0007669"/>
    <property type="project" value="InterPro"/>
</dbReference>
<dbReference type="Gene3D" id="3.60.15.10">
    <property type="entry name" value="Ribonuclease Z/Hydroxyacylglutathione hydrolase-like"/>
    <property type="match status" value="1"/>
</dbReference>
<dbReference type="HAMAP" id="MF_01374">
    <property type="entry name" value="Glyoxalase_2"/>
    <property type="match status" value="1"/>
</dbReference>
<dbReference type="InterPro" id="IPR001018">
    <property type="entry name" value="Beta-lactamase_class-B_CS"/>
</dbReference>
<dbReference type="InterPro" id="IPR050110">
    <property type="entry name" value="Glyoxalase_II_hydrolase"/>
</dbReference>
<dbReference type="InterPro" id="IPR032282">
    <property type="entry name" value="HAGH_C"/>
</dbReference>
<dbReference type="InterPro" id="IPR017782">
    <property type="entry name" value="Hydroxyacylglutathione_Hdrlase"/>
</dbReference>
<dbReference type="InterPro" id="IPR001279">
    <property type="entry name" value="Metallo-B-lactamas"/>
</dbReference>
<dbReference type="InterPro" id="IPR036866">
    <property type="entry name" value="RibonucZ/Hydroxyglut_hydro"/>
</dbReference>
<dbReference type="PANTHER" id="PTHR43705">
    <property type="entry name" value="HYDROXYACYLGLUTATHIONE HYDROLASE"/>
    <property type="match status" value="1"/>
</dbReference>
<dbReference type="PANTHER" id="PTHR43705:SF1">
    <property type="entry name" value="HYDROXYACYLGLUTATHIONE HYDROLASE GLOB"/>
    <property type="match status" value="1"/>
</dbReference>
<dbReference type="Pfam" id="PF16123">
    <property type="entry name" value="HAGH_C"/>
    <property type="match status" value="1"/>
</dbReference>
<dbReference type="Pfam" id="PF00753">
    <property type="entry name" value="Lactamase_B"/>
    <property type="match status" value="1"/>
</dbReference>
<dbReference type="SMART" id="SM00849">
    <property type="entry name" value="Lactamase_B"/>
    <property type="match status" value="1"/>
</dbReference>
<dbReference type="SUPFAM" id="SSF56281">
    <property type="entry name" value="Metallo-hydrolase/oxidoreductase"/>
    <property type="match status" value="1"/>
</dbReference>
<protein>
    <recommendedName>
        <fullName evidence="1">Hydroxyacylglutathione hydrolase</fullName>
        <ecNumber evidence="1">3.1.2.6</ecNumber>
    </recommendedName>
    <alternativeName>
        <fullName evidence="1">Glyoxalase II</fullName>
        <shortName evidence="1">Glx II</shortName>
    </alternativeName>
</protein>
<reference key="1">
    <citation type="submission" date="2006-01" db="EMBL/GenBank/DDBJ databases">
        <title>Complete sequence of Anaeromyxobacter dehalogenans 2CP-C.</title>
        <authorList>
            <person name="Copeland A."/>
            <person name="Lucas S."/>
            <person name="Lapidus A."/>
            <person name="Barry K."/>
            <person name="Detter J.C."/>
            <person name="Glavina T."/>
            <person name="Hammon N."/>
            <person name="Israni S."/>
            <person name="Pitluck S."/>
            <person name="Brettin T."/>
            <person name="Bruce D."/>
            <person name="Han C."/>
            <person name="Tapia R."/>
            <person name="Gilna P."/>
            <person name="Kiss H."/>
            <person name="Schmutz J."/>
            <person name="Larimer F."/>
            <person name="Land M."/>
            <person name="Kyrpides N."/>
            <person name="Anderson I."/>
            <person name="Sanford R.A."/>
            <person name="Ritalahti K.M."/>
            <person name="Thomas H.S."/>
            <person name="Kirby J.R."/>
            <person name="Zhulin I.B."/>
            <person name="Loeffler F.E."/>
            <person name="Richardson P."/>
        </authorList>
    </citation>
    <scope>NUCLEOTIDE SEQUENCE [LARGE SCALE GENOMIC DNA]</scope>
    <source>
        <strain>2CP-C</strain>
    </source>
</reference>
<comment type="function">
    <text evidence="1">Thiolesterase that catalyzes the hydrolysis of S-D-lactoyl-glutathione to form glutathione and D-lactic acid.</text>
</comment>
<comment type="catalytic activity">
    <reaction evidence="1">
        <text>an S-(2-hydroxyacyl)glutathione + H2O = a 2-hydroxy carboxylate + glutathione + H(+)</text>
        <dbReference type="Rhea" id="RHEA:21864"/>
        <dbReference type="ChEBI" id="CHEBI:15377"/>
        <dbReference type="ChEBI" id="CHEBI:15378"/>
        <dbReference type="ChEBI" id="CHEBI:57925"/>
        <dbReference type="ChEBI" id="CHEBI:58896"/>
        <dbReference type="ChEBI" id="CHEBI:71261"/>
        <dbReference type="EC" id="3.1.2.6"/>
    </reaction>
</comment>
<comment type="cofactor">
    <cofactor evidence="1">
        <name>Zn(2+)</name>
        <dbReference type="ChEBI" id="CHEBI:29105"/>
    </cofactor>
    <text evidence="1">Binds 2 Zn(2+) ions per subunit.</text>
</comment>
<comment type="pathway">
    <text evidence="1">Secondary metabolite metabolism; methylglyoxal degradation; (R)-lactate from methylglyoxal: step 2/2.</text>
</comment>
<comment type="subunit">
    <text evidence="1">Monomer.</text>
</comment>
<comment type="similarity">
    <text evidence="1">Belongs to the metallo-beta-lactamase superfamily. Glyoxalase II family.</text>
</comment>
<name>GLO2_ANADE</name>